<keyword id="KW-0028">Amino-acid biosynthesis</keyword>
<keyword id="KW-0057">Aromatic amino acid biosynthesis</keyword>
<keyword id="KW-0413">Isomerase</keyword>
<keyword id="KW-1185">Reference proteome</keyword>
<keyword id="KW-0822">Tryptophan biosynthesis</keyword>
<sequence length="209" mass="21804">MVAQVKICGLNSAASVAASIAGGADYLGFVFFPPSPRAVTAQEAASLAAPIAQPLRKVGLFVNPRDGEIEAVLRELPLDIIQLHDVPVARALQLRERLALPVWRSVGIAAADDLPRDSGGVDALLLDAKPRPDAALPGGNGQAFDWSILADFAPSFAWILAGGLTPDTVADAVRRTGAPIVDVSSGVEQSRGRKDPALIRSFLSAVRNA</sequence>
<dbReference type="EC" id="5.3.1.24" evidence="1"/>
<dbReference type="EMBL" id="CP000394">
    <property type="protein sequence ID" value="ABI62915.1"/>
    <property type="molecule type" value="Genomic_DNA"/>
</dbReference>
<dbReference type="RefSeq" id="WP_011632717.1">
    <property type="nucleotide sequence ID" value="NC_008343.2"/>
</dbReference>
<dbReference type="SMR" id="Q0BQI7"/>
<dbReference type="STRING" id="391165.GbCGDNIH1_2017"/>
<dbReference type="KEGG" id="gbe:GbCGDNIH1_2017"/>
<dbReference type="eggNOG" id="COG0135">
    <property type="taxonomic scope" value="Bacteria"/>
</dbReference>
<dbReference type="HOGENOM" id="CLU_076364_0_1_5"/>
<dbReference type="OrthoDB" id="9796196at2"/>
<dbReference type="UniPathway" id="UPA00035">
    <property type="reaction ID" value="UER00042"/>
</dbReference>
<dbReference type="Proteomes" id="UP000001963">
    <property type="component" value="Chromosome"/>
</dbReference>
<dbReference type="GO" id="GO:0004640">
    <property type="term" value="F:phosphoribosylanthranilate isomerase activity"/>
    <property type="evidence" value="ECO:0007669"/>
    <property type="project" value="UniProtKB-UniRule"/>
</dbReference>
<dbReference type="GO" id="GO:0000162">
    <property type="term" value="P:L-tryptophan biosynthetic process"/>
    <property type="evidence" value="ECO:0007669"/>
    <property type="project" value="UniProtKB-UniRule"/>
</dbReference>
<dbReference type="CDD" id="cd00405">
    <property type="entry name" value="PRAI"/>
    <property type="match status" value="1"/>
</dbReference>
<dbReference type="Gene3D" id="3.20.20.70">
    <property type="entry name" value="Aldolase class I"/>
    <property type="match status" value="1"/>
</dbReference>
<dbReference type="HAMAP" id="MF_00135">
    <property type="entry name" value="PRAI"/>
    <property type="match status" value="1"/>
</dbReference>
<dbReference type="InterPro" id="IPR013785">
    <property type="entry name" value="Aldolase_TIM"/>
</dbReference>
<dbReference type="InterPro" id="IPR001240">
    <property type="entry name" value="PRAI_dom"/>
</dbReference>
<dbReference type="InterPro" id="IPR011060">
    <property type="entry name" value="RibuloseP-bd_barrel"/>
</dbReference>
<dbReference type="InterPro" id="IPR044643">
    <property type="entry name" value="TrpF_fam"/>
</dbReference>
<dbReference type="NCBIfam" id="NF002295">
    <property type="entry name" value="PRK01222.1-1"/>
    <property type="match status" value="1"/>
</dbReference>
<dbReference type="PANTHER" id="PTHR42894">
    <property type="entry name" value="N-(5'-PHOSPHORIBOSYL)ANTHRANILATE ISOMERASE"/>
    <property type="match status" value="1"/>
</dbReference>
<dbReference type="PANTHER" id="PTHR42894:SF1">
    <property type="entry name" value="N-(5'-PHOSPHORIBOSYL)ANTHRANILATE ISOMERASE"/>
    <property type="match status" value="1"/>
</dbReference>
<dbReference type="Pfam" id="PF00697">
    <property type="entry name" value="PRAI"/>
    <property type="match status" value="1"/>
</dbReference>
<dbReference type="SUPFAM" id="SSF51366">
    <property type="entry name" value="Ribulose-phoshate binding barrel"/>
    <property type="match status" value="1"/>
</dbReference>
<name>TRPF_GRABC</name>
<gene>
    <name evidence="1" type="primary">trpF</name>
    <name type="ordered locus">GbCGDNIH1_2017</name>
</gene>
<reference key="1">
    <citation type="journal article" date="2007" name="J. Bacteriol.">
        <title>Genome sequence analysis of the emerging human pathogenic acetic acid bacterium Granulibacter bethesdensis.</title>
        <authorList>
            <person name="Greenberg D.E."/>
            <person name="Porcella S.F."/>
            <person name="Zelazny A.M."/>
            <person name="Virtaneva K."/>
            <person name="Sturdevant D.E."/>
            <person name="Kupko J.J. III"/>
            <person name="Barbian K.D."/>
            <person name="Babar A."/>
            <person name="Dorward D.W."/>
            <person name="Holland S.M."/>
        </authorList>
    </citation>
    <scope>NUCLEOTIDE SEQUENCE [LARGE SCALE GENOMIC DNA]</scope>
    <source>
        <strain>ATCC BAA-1260 / CGDNIH1</strain>
    </source>
</reference>
<protein>
    <recommendedName>
        <fullName evidence="1">N-(5'-phosphoribosyl)anthranilate isomerase</fullName>
        <shortName evidence="1">PRAI</shortName>
        <ecNumber evidence="1">5.3.1.24</ecNumber>
    </recommendedName>
</protein>
<organism>
    <name type="scientific">Granulibacter bethesdensis (strain ATCC BAA-1260 / CGDNIH1)</name>
    <dbReference type="NCBI Taxonomy" id="391165"/>
    <lineage>
        <taxon>Bacteria</taxon>
        <taxon>Pseudomonadati</taxon>
        <taxon>Pseudomonadota</taxon>
        <taxon>Alphaproteobacteria</taxon>
        <taxon>Acetobacterales</taxon>
        <taxon>Acetobacteraceae</taxon>
        <taxon>Granulibacter</taxon>
    </lineage>
</organism>
<accession>Q0BQI7</accession>
<proteinExistence type="inferred from homology"/>
<evidence type="ECO:0000255" key="1">
    <source>
        <dbReference type="HAMAP-Rule" id="MF_00135"/>
    </source>
</evidence>
<comment type="catalytic activity">
    <reaction evidence="1">
        <text>N-(5-phospho-beta-D-ribosyl)anthranilate = 1-(2-carboxyphenylamino)-1-deoxy-D-ribulose 5-phosphate</text>
        <dbReference type="Rhea" id="RHEA:21540"/>
        <dbReference type="ChEBI" id="CHEBI:18277"/>
        <dbReference type="ChEBI" id="CHEBI:58613"/>
        <dbReference type="EC" id="5.3.1.24"/>
    </reaction>
</comment>
<comment type="pathway">
    <text evidence="1">Amino-acid biosynthesis; L-tryptophan biosynthesis; L-tryptophan from chorismate: step 3/5.</text>
</comment>
<comment type="similarity">
    <text evidence="1">Belongs to the TrpF family.</text>
</comment>
<feature type="chain" id="PRO_1000018596" description="N-(5'-phosphoribosyl)anthranilate isomerase">
    <location>
        <begin position="1"/>
        <end position="209"/>
    </location>
</feature>